<feature type="transit peptide" description="Mitochondrion" evidence="1">
    <location>
        <begin position="1"/>
        <end position="49"/>
    </location>
</feature>
<feature type="chain" id="PRO_0000450306" description="Protein RETARDED ROOT GROWTH, mitochondrial">
    <location>
        <begin position="50"/>
        <end position="373"/>
    </location>
</feature>
<feature type="transmembrane region" description="Helical" evidence="1">
    <location>
        <begin position="346"/>
        <end position="362"/>
    </location>
</feature>
<feature type="mutagenesis site" description="In rrg-1; shorter root due to a reduced number of dividing cells affecting postembryonic root meristem size." evidence="2">
    <original>E</original>
    <variation>K</variation>
    <location>
        <position position="346"/>
    </location>
</feature>
<feature type="sequence conflict" description="In Ref. 3; AAM61045." evidence="4" ref="3">
    <original>D</original>
    <variation>V</variation>
    <location>
        <position position="248"/>
    </location>
</feature>
<feature type="sequence conflict" description="In Ref. 3; AAM61045." evidence="4" ref="3">
    <original>G</original>
    <variation>S</variation>
    <location>
        <position position="360"/>
    </location>
</feature>
<sequence>MGKWRAVAALLLRNQLLNSSKRLNLSSSPCVSKHPTIGLASRFLNFRHFSAFPSPISIYNNDSDSGSNDAYQNYEFGTEAEEALGKIPIKAYFLSTSIDLKAMQAENLCNVVPPTSRSTNYIALKFSDFTPSGIYSLDERESVSNCKFMVVFQYGSAILFNVDDNDVDRYLDIVRRHASGLLTEMRKDDYAVKEKPLLIEEMKGGPDYIVLKTLDTNSIRIIGSVLGQSIALDYSVSQVNKLVEEFADINRSMAKTGTFTMTRKKLFQLVGKANSNIADVILKVGLFERSEIAWREARYAQIYEYLREEYEISQRFGDLDYKLKFIEHNIHFLQEVMQNRQSDLLEWCIIFLLAIENAIGIYEIVRESAGASL</sequence>
<dbReference type="EMBL" id="AC018364">
    <property type="protein sequence ID" value="AAG52494.1"/>
    <property type="molecule type" value="Genomic_DNA"/>
</dbReference>
<dbReference type="EMBL" id="AC073178">
    <property type="protein sequence ID" value="AAG60106.1"/>
    <property type="molecule type" value="Genomic_DNA"/>
</dbReference>
<dbReference type="EMBL" id="CP002684">
    <property type="protein sequence ID" value="AEE34917.1"/>
    <property type="molecule type" value="Genomic_DNA"/>
</dbReference>
<dbReference type="EMBL" id="AY084474">
    <property type="protein sequence ID" value="AAM61045.1"/>
    <property type="molecule type" value="mRNA"/>
</dbReference>
<dbReference type="RefSeq" id="NP_564963.1">
    <property type="nucleotide sequence ID" value="NM_105605.3"/>
</dbReference>
<dbReference type="SMR" id="Q9C565"/>
<dbReference type="FunCoup" id="Q9C565">
    <property type="interactions" value="358"/>
</dbReference>
<dbReference type="STRING" id="3702.Q9C565"/>
<dbReference type="iPTMnet" id="Q9C565"/>
<dbReference type="PaxDb" id="3702-AT1G69380.1"/>
<dbReference type="ProteomicsDB" id="185346"/>
<dbReference type="EnsemblPlants" id="AT1G69380.1">
    <property type="protein sequence ID" value="AT1G69380.1"/>
    <property type="gene ID" value="AT1G69380"/>
</dbReference>
<dbReference type="GeneID" id="843270"/>
<dbReference type="Gramene" id="AT1G69380.1">
    <property type="protein sequence ID" value="AT1G69380.1"/>
    <property type="gene ID" value="AT1G69380"/>
</dbReference>
<dbReference type="KEGG" id="ath:AT1G69380"/>
<dbReference type="Araport" id="AT1G69380"/>
<dbReference type="TAIR" id="AT1G69380">
    <property type="gene designation" value="RRG"/>
</dbReference>
<dbReference type="eggNOG" id="KOG2861">
    <property type="taxonomic scope" value="Eukaryota"/>
</dbReference>
<dbReference type="HOGENOM" id="CLU_011220_2_2_1"/>
<dbReference type="InParanoid" id="Q9C565"/>
<dbReference type="OMA" id="NGPGFHV"/>
<dbReference type="OrthoDB" id="18302at2759"/>
<dbReference type="PhylomeDB" id="Q9C565"/>
<dbReference type="PRO" id="PR:Q9C565"/>
<dbReference type="Proteomes" id="UP000006548">
    <property type="component" value="Chromosome 1"/>
</dbReference>
<dbReference type="ExpressionAtlas" id="Q9C565">
    <property type="expression patterns" value="baseline and differential"/>
</dbReference>
<dbReference type="GO" id="GO:0031966">
    <property type="term" value="C:mitochondrial membrane"/>
    <property type="evidence" value="ECO:0007669"/>
    <property type="project" value="UniProtKB-SubCell"/>
</dbReference>
<dbReference type="GO" id="GO:0005739">
    <property type="term" value="C:mitochondrion"/>
    <property type="evidence" value="ECO:0000314"/>
    <property type="project" value="TAIR"/>
</dbReference>
<dbReference type="GO" id="GO:0051302">
    <property type="term" value="P:regulation of cell division"/>
    <property type="evidence" value="ECO:0000315"/>
    <property type="project" value="TAIR"/>
</dbReference>
<dbReference type="GO" id="GO:0032875">
    <property type="term" value="P:regulation of DNA endoreduplication"/>
    <property type="evidence" value="ECO:0000315"/>
    <property type="project" value="TAIR"/>
</dbReference>
<dbReference type="GO" id="GO:0010082">
    <property type="term" value="P:regulation of root meristem growth"/>
    <property type="evidence" value="ECO:0000315"/>
    <property type="project" value="TAIR"/>
</dbReference>
<dbReference type="InterPro" id="IPR003734">
    <property type="entry name" value="DUF155"/>
</dbReference>
<dbReference type="InterPro" id="IPR051624">
    <property type="entry name" value="RMD1/Sad1-interacting"/>
</dbReference>
<dbReference type="PANTHER" id="PTHR16255:SF16">
    <property type="entry name" value="PROTEIN RETARDED ROOT GROWTH, MITOCHONDRIAL"/>
    <property type="match status" value="1"/>
</dbReference>
<dbReference type="PANTHER" id="PTHR16255">
    <property type="entry name" value="REQUIRED FOR MEIOTIC NUCLEAR DIVISION PROTEIN 1 HOMOLOG"/>
    <property type="match status" value="1"/>
</dbReference>
<dbReference type="Pfam" id="PF02582">
    <property type="entry name" value="DUF155"/>
    <property type="match status" value="1"/>
</dbReference>
<organism>
    <name type="scientific">Arabidopsis thaliana</name>
    <name type="common">Mouse-ear cress</name>
    <dbReference type="NCBI Taxonomy" id="3702"/>
    <lineage>
        <taxon>Eukaryota</taxon>
        <taxon>Viridiplantae</taxon>
        <taxon>Streptophyta</taxon>
        <taxon>Embryophyta</taxon>
        <taxon>Tracheophyta</taxon>
        <taxon>Spermatophyta</taxon>
        <taxon>Magnoliopsida</taxon>
        <taxon>eudicotyledons</taxon>
        <taxon>Gunneridae</taxon>
        <taxon>Pentapetalae</taxon>
        <taxon>rosids</taxon>
        <taxon>malvids</taxon>
        <taxon>Brassicales</taxon>
        <taxon>Brassicaceae</taxon>
        <taxon>Camelineae</taxon>
        <taxon>Arabidopsis</taxon>
    </lineage>
</organism>
<gene>
    <name evidence="3" type="primary">RRG</name>
    <name evidence="6" type="ordered locus">At1g69380</name>
    <name evidence="8" type="ORF">F10D13.7</name>
    <name evidence="7" type="ORF">F23O10.4</name>
</gene>
<proteinExistence type="evidence at protein level"/>
<comment type="function">
    <text evidence="2">Required for the maintenance of mitochondrial structure (PubMed:21984726). Positive regulator of cell division and endoreduplication but negative regulator of cell expansion in the postembryonic root meristem, thus leading to the promotion of root growth (PubMed:21984726).</text>
</comment>
<comment type="subcellular location">
    <subcellularLocation>
        <location evidence="5">Mitochondrion membrane</location>
        <topology evidence="1">Single-pass membrane protein</topology>
    </subcellularLocation>
    <subcellularLocation>
        <location evidence="2">Mitochondrion</location>
    </subcellularLocation>
</comment>
<comment type="tissue specificity">
    <text evidence="2">Predominantly expressed in the root meristem, in the primary and lateral root tips (PubMed:21984726). Also present in leaves and pollen (PubMed:21984726).</text>
</comment>
<comment type="developmental stage">
    <text evidence="2">In root tips, preferentially expressed in quiescent center (QC) cells, cortex/endodermis stem cells and their daughter cells, and endodermal and stele cells of root meristems.</text>
</comment>
<comment type="disruption phenotype">
    <text evidence="2">Reduced number of dividing cells and slower rate of cell production and endoreduplication, thus affecting root meristem size and delaying postembryonic root growth (PubMed:21984726). Decreased expression of several cell cycle genes indicating a defect in cell cycle progression (PubMed:21984726). Extensive vacuolization in mitochondria (PubMed:21984726).</text>
</comment>
<comment type="similarity">
    <text evidence="4">Belongs to the RMD1/sif2 family.</text>
</comment>
<protein>
    <recommendedName>
        <fullName evidence="3">Protein RETARDED ROOT GROWTH, mitochondrial</fullName>
    </recommendedName>
</protein>
<name>RRG_ARATH</name>
<reference key="1">
    <citation type="journal article" date="2000" name="Nature">
        <title>Sequence and analysis of chromosome 1 of the plant Arabidopsis thaliana.</title>
        <authorList>
            <person name="Theologis A."/>
            <person name="Ecker J.R."/>
            <person name="Palm C.J."/>
            <person name="Federspiel N.A."/>
            <person name="Kaul S."/>
            <person name="White O."/>
            <person name="Alonso J."/>
            <person name="Altafi H."/>
            <person name="Araujo R."/>
            <person name="Bowman C.L."/>
            <person name="Brooks S.Y."/>
            <person name="Buehler E."/>
            <person name="Chan A."/>
            <person name="Chao Q."/>
            <person name="Chen H."/>
            <person name="Cheuk R.F."/>
            <person name="Chin C.W."/>
            <person name="Chung M.K."/>
            <person name="Conn L."/>
            <person name="Conway A.B."/>
            <person name="Conway A.R."/>
            <person name="Creasy T.H."/>
            <person name="Dewar K."/>
            <person name="Dunn P."/>
            <person name="Etgu P."/>
            <person name="Feldblyum T.V."/>
            <person name="Feng J.-D."/>
            <person name="Fong B."/>
            <person name="Fujii C.Y."/>
            <person name="Gill J.E."/>
            <person name="Goldsmith A.D."/>
            <person name="Haas B."/>
            <person name="Hansen N.F."/>
            <person name="Hughes B."/>
            <person name="Huizar L."/>
            <person name="Hunter J.L."/>
            <person name="Jenkins J."/>
            <person name="Johnson-Hopson C."/>
            <person name="Khan S."/>
            <person name="Khaykin E."/>
            <person name="Kim C.J."/>
            <person name="Koo H.L."/>
            <person name="Kremenetskaia I."/>
            <person name="Kurtz D.B."/>
            <person name="Kwan A."/>
            <person name="Lam B."/>
            <person name="Langin-Hooper S."/>
            <person name="Lee A."/>
            <person name="Lee J.M."/>
            <person name="Lenz C.A."/>
            <person name="Li J.H."/>
            <person name="Li Y.-P."/>
            <person name="Lin X."/>
            <person name="Liu S.X."/>
            <person name="Liu Z.A."/>
            <person name="Luros J.S."/>
            <person name="Maiti R."/>
            <person name="Marziali A."/>
            <person name="Militscher J."/>
            <person name="Miranda M."/>
            <person name="Nguyen M."/>
            <person name="Nierman W.C."/>
            <person name="Osborne B.I."/>
            <person name="Pai G."/>
            <person name="Peterson J."/>
            <person name="Pham P.K."/>
            <person name="Rizzo M."/>
            <person name="Rooney T."/>
            <person name="Rowley D."/>
            <person name="Sakano H."/>
            <person name="Salzberg S.L."/>
            <person name="Schwartz J.R."/>
            <person name="Shinn P."/>
            <person name="Southwick A.M."/>
            <person name="Sun H."/>
            <person name="Tallon L.J."/>
            <person name="Tambunga G."/>
            <person name="Toriumi M.J."/>
            <person name="Town C.D."/>
            <person name="Utterback T."/>
            <person name="Van Aken S."/>
            <person name="Vaysberg M."/>
            <person name="Vysotskaia V.S."/>
            <person name="Walker M."/>
            <person name="Wu D."/>
            <person name="Yu G."/>
            <person name="Fraser C.M."/>
            <person name="Venter J.C."/>
            <person name="Davis R.W."/>
        </authorList>
    </citation>
    <scope>NUCLEOTIDE SEQUENCE [LARGE SCALE GENOMIC DNA]</scope>
    <source>
        <strain>cv. Columbia</strain>
    </source>
</reference>
<reference key="2">
    <citation type="journal article" date="2017" name="Plant J.">
        <title>Araport11: a complete reannotation of the Arabidopsis thaliana reference genome.</title>
        <authorList>
            <person name="Cheng C.Y."/>
            <person name="Krishnakumar V."/>
            <person name="Chan A.P."/>
            <person name="Thibaud-Nissen F."/>
            <person name="Schobel S."/>
            <person name="Town C.D."/>
        </authorList>
    </citation>
    <scope>GENOME REANNOTATION</scope>
    <source>
        <strain>cv. Columbia</strain>
    </source>
</reference>
<reference key="3">
    <citation type="submission" date="2002-03" db="EMBL/GenBank/DDBJ databases">
        <title>Full-length cDNA from Arabidopsis thaliana.</title>
        <authorList>
            <person name="Brover V.V."/>
            <person name="Troukhan M.E."/>
            <person name="Alexandrov N.A."/>
            <person name="Lu Y.-P."/>
            <person name="Flavell R.B."/>
            <person name="Feldmann K.A."/>
        </authorList>
    </citation>
    <scope>NUCLEOTIDE SEQUENCE [LARGE SCALE MRNA]</scope>
</reference>
<reference key="4">
    <citation type="journal article" date="2011" name="Plant Physiol.">
        <title>The Arabidopsis RETARDED ROOT GROWTH gene encodes a mitochondria-localized protein that is required for cell division in the root meristem.</title>
        <authorList>
            <person name="Zhou X."/>
            <person name="Li Q."/>
            <person name="Chen X."/>
            <person name="Liu J."/>
            <person name="Zhang Q."/>
            <person name="Liu Y."/>
            <person name="Liu K."/>
            <person name="Xu J."/>
        </authorList>
    </citation>
    <scope>FUNCTION</scope>
    <scope>MUTAGENESIS OF GLU-346</scope>
    <scope>DISRUPTION PHENOTYPE</scope>
    <scope>SUBCELLULAR LOCATION</scope>
    <scope>TISSUE SPECIFICITY</scope>
    <scope>DEVELOPMENTAL STAGE</scope>
    <source>
        <strain>cv. Columbia</strain>
    </source>
</reference>
<accession>Q9C565</accession>
<accession>Q8LG43</accession>
<evidence type="ECO:0000255" key="1"/>
<evidence type="ECO:0000269" key="2">
    <source>
    </source>
</evidence>
<evidence type="ECO:0000303" key="3">
    <source>
    </source>
</evidence>
<evidence type="ECO:0000305" key="4"/>
<evidence type="ECO:0000305" key="5">
    <source>
    </source>
</evidence>
<evidence type="ECO:0000312" key="6">
    <source>
        <dbReference type="Araport" id="AT1G69380"/>
    </source>
</evidence>
<evidence type="ECO:0000312" key="7">
    <source>
        <dbReference type="EMBL" id="AAG52494.1"/>
    </source>
</evidence>
<evidence type="ECO:0000312" key="8">
    <source>
        <dbReference type="EMBL" id="AAG60106.1"/>
    </source>
</evidence>
<keyword id="KW-0131">Cell cycle</keyword>
<keyword id="KW-0472">Membrane</keyword>
<keyword id="KW-0496">Mitochondrion</keyword>
<keyword id="KW-1185">Reference proteome</keyword>
<keyword id="KW-0809">Transit peptide</keyword>
<keyword id="KW-0812">Transmembrane</keyword>
<keyword id="KW-1133">Transmembrane helix</keyword>